<evidence type="ECO:0000250" key="1">
    <source>
        <dbReference type="UniProtKB" id="P0AFP6"/>
    </source>
</evidence>
<evidence type="ECO:0000305" key="2"/>
<protein>
    <recommendedName>
        <fullName>GTP cyclohydrolase 1 type 2 homolog</fullName>
    </recommendedName>
</protein>
<gene>
    <name type="ordered locus">NMA0382</name>
</gene>
<accession>Q9JWG6</accession>
<accession>A1IPK4</accession>
<keyword id="KW-0479">Metal-binding</keyword>
<comment type="subunit">
    <text evidence="1">Homohexamer.</text>
</comment>
<comment type="similarity">
    <text evidence="2">Belongs to the GTP cyclohydrolase I type 2/NIF3 family.</text>
</comment>
<feature type="chain" id="PRO_0000147320" description="GTP cyclohydrolase 1 type 2 homolog">
    <location>
        <begin position="1"/>
        <end position="249"/>
    </location>
</feature>
<feature type="binding site" evidence="1">
    <location>
        <position position="64"/>
    </location>
    <ligand>
        <name>a divalent metal cation</name>
        <dbReference type="ChEBI" id="CHEBI:60240"/>
        <label>1</label>
    </ligand>
</feature>
<feature type="binding site" evidence="1">
    <location>
        <position position="65"/>
    </location>
    <ligand>
        <name>a divalent metal cation</name>
        <dbReference type="ChEBI" id="CHEBI:60240"/>
        <label>2</label>
    </ligand>
</feature>
<feature type="binding site" evidence="1">
    <location>
        <position position="102"/>
    </location>
    <ligand>
        <name>a divalent metal cation</name>
        <dbReference type="ChEBI" id="CHEBI:60240"/>
        <label>1</label>
    </ligand>
</feature>
<feature type="binding site" evidence="1">
    <location>
        <position position="217"/>
    </location>
    <ligand>
        <name>a divalent metal cation</name>
        <dbReference type="ChEBI" id="CHEBI:60240"/>
        <label>2</label>
    </ligand>
</feature>
<feature type="binding site" evidence="1">
    <location>
        <position position="221"/>
    </location>
    <ligand>
        <name>a divalent metal cation</name>
        <dbReference type="ChEBI" id="CHEBI:60240"/>
        <label>1</label>
    </ligand>
</feature>
<feature type="binding site" evidence="1">
    <location>
        <position position="221"/>
    </location>
    <ligand>
        <name>a divalent metal cation</name>
        <dbReference type="ChEBI" id="CHEBI:60240"/>
        <label>2</label>
    </ligand>
</feature>
<organism>
    <name type="scientific">Neisseria meningitidis serogroup A / serotype 4A (strain DSM 15465 / Z2491)</name>
    <dbReference type="NCBI Taxonomy" id="122587"/>
    <lineage>
        <taxon>Bacteria</taxon>
        <taxon>Pseudomonadati</taxon>
        <taxon>Pseudomonadota</taxon>
        <taxon>Betaproteobacteria</taxon>
        <taxon>Neisseriales</taxon>
        <taxon>Neisseriaceae</taxon>
        <taxon>Neisseria</taxon>
    </lineage>
</organism>
<sequence>MVLRRDFLTWCNETLQTALFKDYAPNGLQVEGREYIGKIVTSVTASRAAIDFAVEQKADLLLVHHGMFWKNELPTVTGWKKERIAALLRHDINMAGYHLPLDAHPTLGNNAQLADRLGFATEKRFGEQNLLNSGSLKQAKTLGALAAHIETVLQRKPVVIGKPEREIRRVAWCSGGAQGFFQTAIDEGVDLYLTGEISEAQYHLANETGTAFISAGHHATERYGVRALAESAAEVFGLEVCHFDENNPA</sequence>
<proteinExistence type="inferred from homology"/>
<name>GCH1L_NEIMA</name>
<dbReference type="EMBL" id="AL157959">
    <property type="protein sequence ID" value="CAM07674.1"/>
    <property type="molecule type" value="Genomic_DNA"/>
</dbReference>
<dbReference type="PIR" id="D81954">
    <property type="entry name" value="D81954"/>
</dbReference>
<dbReference type="RefSeq" id="WP_002215006.1">
    <property type="nucleotide sequence ID" value="NC_003116.1"/>
</dbReference>
<dbReference type="SMR" id="Q9JWG6"/>
<dbReference type="EnsemblBacteria" id="CAM07674">
    <property type="protein sequence ID" value="CAM07674"/>
    <property type="gene ID" value="NMA0382"/>
</dbReference>
<dbReference type="KEGG" id="nma:NMA0382"/>
<dbReference type="HOGENOM" id="CLU_037423_3_0_4"/>
<dbReference type="Proteomes" id="UP000000626">
    <property type="component" value="Chromosome"/>
</dbReference>
<dbReference type="GO" id="GO:0005737">
    <property type="term" value="C:cytoplasm"/>
    <property type="evidence" value="ECO:0007669"/>
    <property type="project" value="TreeGrafter"/>
</dbReference>
<dbReference type="GO" id="GO:0046872">
    <property type="term" value="F:metal ion binding"/>
    <property type="evidence" value="ECO:0007669"/>
    <property type="project" value="UniProtKB-KW"/>
</dbReference>
<dbReference type="FunFam" id="3.40.1390.30:FF:000002">
    <property type="entry name" value="Nif3-like dinuclear metal center protein"/>
    <property type="match status" value="1"/>
</dbReference>
<dbReference type="Gene3D" id="3.40.1390.30">
    <property type="entry name" value="NIF3 (NGG1p interacting factor 3)-like"/>
    <property type="match status" value="2"/>
</dbReference>
<dbReference type="InterPro" id="IPR002678">
    <property type="entry name" value="DUF34/NIF3"/>
</dbReference>
<dbReference type="InterPro" id="IPR036069">
    <property type="entry name" value="DUF34/NIF3_sf"/>
</dbReference>
<dbReference type="NCBIfam" id="TIGR00486">
    <property type="entry name" value="YbgI_SA1388"/>
    <property type="match status" value="1"/>
</dbReference>
<dbReference type="PANTHER" id="PTHR13799:SF14">
    <property type="entry name" value="GTP CYCLOHYDROLASE 1 TYPE 2 HOMOLOG"/>
    <property type="match status" value="1"/>
</dbReference>
<dbReference type="PANTHER" id="PTHR13799">
    <property type="entry name" value="NGG1 INTERACTING FACTOR 3"/>
    <property type="match status" value="1"/>
</dbReference>
<dbReference type="Pfam" id="PF01784">
    <property type="entry name" value="DUF34_NIF3"/>
    <property type="match status" value="1"/>
</dbReference>
<dbReference type="SUPFAM" id="SSF102705">
    <property type="entry name" value="NIF3 (NGG1p interacting factor 3)-like"/>
    <property type="match status" value="1"/>
</dbReference>
<reference key="1">
    <citation type="journal article" date="2000" name="Nature">
        <title>Complete DNA sequence of a serogroup A strain of Neisseria meningitidis Z2491.</title>
        <authorList>
            <person name="Parkhill J."/>
            <person name="Achtman M."/>
            <person name="James K.D."/>
            <person name="Bentley S.D."/>
            <person name="Churcher C.M."/>
            <person name="Klee S.R."/>
            <person name="Morelli G."/>
            <person name="Basham D."/>
            <person name="Brown D."/>
            <person name="Chillingworth T."/>
            <person name="Davies R.M."/>
            <person name="Davis P."/>
            <person name="Devlin K."/>
            <person name="Feltwell T."/>
            <person name="Hamlin N."/>
            <person name="Holroyd S."/>
            <person name="Jagels K."/>
            <person name="Leather S."/>
            <person name="Moule S."/>
            <person name="Mungall K.L."/>
            <person name="Quail M.A."/>
            <person name="Rajandream M.A."/>
            <person name="Rutherford K.M."/>
            <person name="Simmonds M."/>
            <person name="Skelton J."/>
            <person name="Whitehead S."/>
            <person name="Spratt B.G."/>
            <person name="Barrell B.G."/>
        </authorList>
    </citation>
    <scope>NUCLEOTIDE SEQUENCE [LARGE SCALE GENOMIC DNA]</scope>
    <source>
        <strain>DSM 15465 / Z2491</strain>
    </source>
</reference>